<evidence type="ECO:0000250" key="1"/>
<evidence type="ECO:0000305" key="2"/>
<name>MVP_SCPMV</name>
<sequence>MIYETLVLSKTELEQLNVDLPRYSYRFRYSRSIGDTVVEFPGTLSDPCIPVVDVLLGACWAWPQPSRHGGLGLDDIDPFDASFSCCVTSPERYCLSRSVLSGVDAFVVRGSCKLCGLGFLDNFNPFEIRALLGQTTPGLWWQPVKPVYDDRNIHLPYDSELNARIQRFQYTCRECIVRVAFHMSS</sequence>
<gene>
    <name type="ORF">ORF1</name>
</gene>
<protein>
    <recommendedName>
        <fullName>Movement protein P1</fullName>
    </recommendedName>
    <alternativeName>
        <fullName>Cell-to-cell transport protein</fullName>
    </alternativeName>
</protein>
<dbReference type="EMBL" id="M23021">
    <property type="protein sequence ID" value="AAA46564.1"/>
    <property type="molecule type" value="Genomic_RNA"/>
</dbReference>
<dbReference type="PIR" id="A33739">
    <property type="entry name" value="WMBWSC"/>
</dbReference>
<dbReference type="RefSeq" id="NP_042300.1">
    <property type="nucleotide sequence ID" value="NC_001625.2"/>
</dbReference>
<dbReference type="KEGG" id="vg:1481844"/>
<dbReference type="Proteomes" id="UP000008033">
    <property type="component" value="Genome"/>
</dbReference>
<dbReference type="GO" id="GO:0052170">
    <property type="term" value="P:symbiont-mediated suppression of host innate immune response"/>
    <property type="evidence" value="ECO:0007669"/>
    <property type="project" value="UniProtKB-KW"/>
</dbReference>
<dbReference type="GO" id="GO:0046740">
    <property type="term" value="P:transport of virus in host, cell to cell"/>
    <property type="evidence" value="ECO:0007669"/>
    <property type="project" value="UniProtKB-KW"/>
</dbReference>
<feature type="chain" id="PRO_0000222495" description="Movement protein P1">
    <location>
        <begin position="1"/>
        <end position="185"/>
    </location>
</feature>
<accession>P21406</accession>
<proteinExistence type="inferred from homology"/>
<organismHost>
    <name type="scientific">Glycine max</name>
    <name type="common">Soybean</name>
    <name type="synonym">Glycine hispida</name>
    <dbReference type="NCBI Taxonomy" id="3847"/>
</organismHost>
<organismHost>
    <name type="scientific">Phaseolus vulgaris</name>
    <name type="common">Kidney bean</name>
    <name type="synonym">French bean</name>
    <dbReference type="NCBI Taxonomy" id="3885"/>
</organismHost>
<organismHost>
    <name type="scientific">Vigna mungo</name>
    <name type="common">Black gram</name>
    <name type="synonym">Phaseolus mungo</name>
    <dbReference type="NCBI Taxonomy" id="3915"/>
</organismHost>
<organismHost>
    <name type="scientific">Vigna unguiculata</name>
    <name type="common">Cowpea</name>
    <dbReference type="NCBI Taxonomy" id="3917"/>
</organismHost>
<keyword id="KW-0945">Host-virus interaction</keyword>
<keyword id="KW-1090">Inhibition of host innate immune response by virus</keyword>
<keyword id="KW-1185">Reference proteome</keyword>
<keyword id="KW-0941">Suppressor of RNA silencing</keyword>
<keyword id="KW-0813">Transport</keyword>
<keyword id="KW-0899">Viral immunoevasion</keyword>
<keyword id="KW-0916">Viral movement protein</keyword>
<organism>
    <name type="scientific">Southern cowpea mosaic virus</name>
    <name type="common">SCPMV</name>
    <name type="synonym">Southern bean mosaic virus (strain cowpea)</name>
    <dbReference type="NCBI Taxonomy" id="196398"/>
    <lineage>
        <taxon>Viruses</taxon>
        <taxon>Riboviria</taxon>
        <taxon>Orthornavirae</taxon>
        <taxon>Pisuviricota</taxon>
        <taxon>Pisoniviricetes</taxon>
        <taxon>Sobelivirales</taxon>
        <taxon>Solemoviridae</taxon>
        <taxon>Sobemovirus</taxon>
    </lineage>
</organism>
<reference key="1">
    <citation type="journal article" date="1987" name="Virology">
        <title>Sequence and organization of southern bean mosaic virus genomic RNA.</title>
        <authorList>
            <person name="Wu S."/>
            <person name="Rinehart C.A."/>
            <person name="Kaesberg P."/>
        </authorList>
    </citation>
    <scope>NUCLEOTIDE SEQUENCE [GENOMIC RNA]</scope>
</reference>
<comment type="function">
    <text evidence="1 2">Transports viral genome to neighboring plant cells directly through plasmosdesmata, without any budding. The movement protein allows efficient cell to cell propagation, by bypassing the host cell wall barrier (Potential). Likely acts as a suppressor of RNA-mediated gene silencing, also known as post-transcriptional gene silencing (PTGS), a mechanism of plant viral defense that performs sequence-specific inhibition of viral mRNAs expression (By similarity).</text>
</comment>